<gene>
    <name evidence="1" type="primary">xseA</name>
    <name type="ordered locus">NFA_47970</name>
</gene>
<dbReference type="EC" id="3.1.11.6" evidence="1"/>
<dbReference type="EMBL" id="AP006618">
    <property type="protein sequence ID" value="BAD59649.1"/>
    <property type="molecule type" value="Genomic_DNA"/>
</dbReference>
<dbReference type="RefSeq" id="WP_011211333.1">
    <property type="nucleotide sequence ID" value="NC_006361.1"/>
</dbReference>
<dbReference type="SMR" id="Q5YQ92"/>
<dbReference type="STRING" id="247156.NFA_47970"/>
<dbReference type="GeneID" id="61135394"/>
<dbReference type="KEGG" id="nfa:NFA_47970"/>
<dbReference type="eggNOG" id="COG1570">
    <property type="taxonomic scope" value="Bacteria"/>
</dbReference>
<dbReference type="HOGENOM" id="CLU_023625_2_1_11"/>
<dbReference type="OrthoDB" id="9802795at2"/>
<dbReference type="Proteomes" id="UP000006820">
    <property type="component" value="Chromosome"/>
</dbReference>
<dbReference type="GO" id="GO:0005737">
    <property type="term" value="C:cytoplasm"/>
    <property type="evidence" value="ECO:0007669"/>
    <property type="project" value="UniProtKB-SubCell"/>
</dbReference>
<dbReference type="GO" id="GO:0009318">
    <property type="term" value="C:exodeoxyribonuclease VII complex"/>
    <property type="evidence" value="ECO:0007669"/>
    <property type="project" value="InterPro"/>
</dbReference>
<dbReference type="GO" id="GO:0008855">
    <property type="term" value="F:exodeoxyribonuclease VII activity"/>
    <property type="evidence" value="ECO:0007669"/>
    <property type="project" value="UniProtKB-UniRule"/>
</dbReference>
<dbReference type="GO" id="GO:0003676">
    <property type="term" value="F:nucleic acid binding"/>
    <property type="evidence" value="ECO:0007669"/>
    <property type="project" value="InterPro"/>
</dbReference>
<dbReference type="GO" id="GO:0006308">
    <property type="term" value="P:DNA catabolic process"/>
    <property type="evidence" value="ECO:0007669"/>
    <property type="project" value="UniProtKB-UniRule"/>
</dbReference>
<dbReference type="CDD" id="cd04489">
    <property type="entry name" value="ExoVII_LU_OBF"/>
    <property type="match status" value="1"/>
</dbReference>
<dbReference type="HAMAP" id="MF_00378">
    <property type="entry name" value="Exonuc_7_L"/>
    <property type="match status" value="1"/>
</dbReference>
<dbReference type="InterPro" id="IPR003753">
    <property type="entry name" value="Exonuc_VII_L"/>
</dbReference>
<dbReference type="InterPro" id="IPR020579">
    <property type="entry name" value="Exonuc_VII_lsu_C"/>
</dbReference>
<dbReference type="InterPro" id="IPR025824">
    <property type="entry name" value="OB-fold_nuc-bd_dom"/>
</dbReference>
<dbReference type="NCBIfam" id="TIGR00237">
    <property type="entry name" value="xseA"/>
    <property type="match status" value="1"/>
</dbReference>
<dbReference type="PANTHER" id="PTHR30008">
    <property type="entry name" value="EXODEOXYRIBONUCLEASE 7 LARGE SUBUNIT"/>
    <property type="match status" value="1"/>
</dbReference>
<dbReference type="PANTHER" id="PTHR30008:SF0">
    <property type="entry name" value="EXODEOXYRIBONUCLEASE 7 LARGE SUBUNIT"/>
    <property type="match status" value="1"/>
</dbReference>
<dbReference type="Pfam" id="PF02601">
    <property type="entry name" value="Exonuc_VII_L"/>
    <property type="match status" value="2"/>
</dbReference>
<dbReference type="Pfam" id="PF13742">
    <property type="entry name" value="tRNA_anti_2"/>
    <property type="match status" value="1"/>
</dbReference>
<feature type="chain" id="PRO_0000303806" description="Exodeoxyribonuclease 7 large subunit">
    <location>
        <begin position="1"/>
        <end position="425"/>
    </location>
</feature>
<name>EX7L_NOCFA</name>
<comment type="function">
    <text evidence="1">Bidirectionally degrades single-stranded DNA into large acid-insoluble oligonucleotides, which are then degraded further into small acid-soluble oligonucleotides.</text>
</comment>
<comment type="catalytic activity">
    <reaction evidence="1">
        <text>Exonucleolytic cleavage in either 5'- to 3'- or 3'- to 5'-direction to yield nucleoside 5'-phosphates.</text>
        <dbReference type="EC" id="3.1.11.6"/>
    </reaction>
</comment>
<comment type="subunit">
    <text evidence="1">Heterooligomer composed of large and small subunits.</text>
</comment>
<comment type="subcellular location">
    <subcellularLocation>
        <location evidence="1">Cytoplasm</location>
    </subcellularLocation>
</comment>
<comment type="similarity">
    <text evidence="1">Belongs to the XseA family.</text>
</comment>
<evidence type="ECO:0000255" key="1">
    <source>
        <dbReference type="HAMAP-Rule" id="MF_00378"/>
    </source>
</evidence>
<proteinExistence type="inferred from homology"/>
<organism>
    <name type="scientific">Nocardia farcinica (strain IFM 10152)</name>
    <dbReference type="NCBI Taxonomy" id="247156"/>
    <lineage>
        <taxon>Bacteria</taxon>
        <taxon>Bacillati</taxon>
        <taxon>Actinomycetota</taxon>
        <taxon>Actinomycetes</taxon>
        <taxon>Mycobacteriales</taxon>
        <taxon>Nocardiaceae</taxon>
        <taxon>Nocardia</taxon>
    </lineage>
</organism>
<accession>Q5YQ92</accession>
<protein>
    <recommendedName>
        <fullName evidence="1">Exodeoxyribonuclease 7 large subunit</fullName>
        <ecNumber evidence="1">3.1.11.6</ecNumber>
    </recommendedName>
    <alternativeName>
        <fullName evidence="1">Exodeoxyribonuclease VII large subunit</fullName>
        <shortName evidence="1">Exonuclease VII large subunit</shortName>
    </alternativeName>
</protein>
<reference key="1">
    <citation type="journal article" date="2004" name="Proc. Natl. Acad. Sci. U.S.A.">
        <title>The complete genomic sequence of Nocardia farcinica IFM 10152.</title>
        <authorList>
            <person name="Ishikawa J."/>
            <person name="Yamashita A."/>
            <person name="Mikami Y."/>
            <person name="Hoshino Y."/>
            <person name="Kurita H."/>
            <person name="Hotta K."/>
            <person name="Shiba T."/>
            <person name="Hattori M."/>
        </authorList>
    </citation>
    <scope>NUCLEOTIDE SEQUENCE [LARGE SCALE GENOMIC DNA]</scope>
    <source>
        <strain>IFM 10152</strain>
    </source>
</reference>
<sequence length="425" mass="45777">MTQDGSAPANSAEHPWPVRSVSVKVMQWIDRLGSIWVEGQITQINLRPGARTAFLVLRDPSADMSLQVTCDPELIRRSPVPLQEGSRVVVYGKLVFFPARGSISLRVLEIRPVGVGELLARIERLKALLAAEGLFDERLKRPIPFLPKVVGLITGRGGAAEHDVLTVARNRWPAVRFEVRNTAVQGPTAVPQILTALAELDRHPEVEVIVLARGGGSVEDLLPFSDEALCRAIVAATTPIVSAIGHEPDNPLSDYVADLRAATPTDAAKRVVPDAAAELALVRELRARSAAALRGWVDREARALAQLRSRPVLADPLREIDRRATEIERLRADARRCVRHLIRTESTATAHLREKLTAVGPAATLARGYAVVQRVTGPERHVVRSIADSPAGSQLRIRVADGAVSAAALGTTAAGTRIADDTGGN</sequence>
<keyword id="KW-0963">Cytoplasm</keyword>
<keyword id="KW-0269">Exonuclease</keyword>
<keyword id="KW-0378">Hydrolase</keyword>
<keyword id="KW-0540">Nuclease</keyword>
<keyword id="KW-1185">Reference proteome</keyword>